<sequence length="152" mass="17783">MTITDLVLILFIAALLAYALYDQFIMPRRNGPTLLSIALLRRGRVDSVIFVGLVAILIYNNVTSHGAQMTTWLLSALALMGFYIFWIRTPRIIFKQRGFFFANVWIEYNRIKEMNLSEDGVLVMQLEQRRLLIRVRNIDDLEKIYKILIENQ</sequence>
<name>YOBD_SALNS</name>
<accession>B4SV74</accession>
<protein>
    <recommendedName>
        <fullName evidence="1">UPF0266 membrane protein YobD</fullName>
    </recommendedName>
</protein>
<keyword id="KW-0997">Cell inner membrane</keyword>
<keyword id="KW-1003">Cell membrane</keyword>
<keyword id="KW-0472">Membrane</keyword>
<keyword id="KW-0812">Transmembrane</keyword>
<keyword id="KW-1133">Transmembrane helix</keyword>
<dbReference type="EMBL" id="CP001113">
    <property type="protein sequence ID" value="ACF63915.1"/>
    <property type="molecule type" value="Genomic_DNA"/>
</dbReference>
<dbReference type="RefSeq" id="WP_000156279.1">
    <property type="nucleotide sequence ID" value="NZ_CCMR01000003.1"/>
</dbReference>
<dbReference type="SMR" id="B4SV74"/>
<dbReference type="KEGG" id="see:SNSL254_A1972"/>
<dbReference type="HOGENOM" id="CLU_133645_0_0_6"/>
<dbReference type="Proteomes" id="UP000008824">
    <property type="component" value="Chromosome"/>
</dbReference>
<dbReference type="GO" id="GO:0005886">
    <property type="term" value="C:plasma membrane"/>
    <property type="evidence" value="ECO:0007669"/>
    <property type="project" value="UniProtKB-SubCell"/>
</dbReference>
<dbReference type="HAMAP" id="MF_01071">
    <property type="entry name" value="UPF0266"/>
    <property type="match status" value="1"/>
</dbReference>
<dbReference type="InterPro" id="IPR009328">
    <property type="entry name" value="DUF986"/>
</dbReference>
<dbReference type="NCBIfam" id="NF002791">
    <property type="entry name" value="PRK02913.1"/>
    <property type="match status" value="1"/>
</dbReference>
<dbReference type="Pfam" id="PF06173">
    <property type="entry name" value="DUF986"/>
    <property type="match status" value="1"/>
</dbReference>
<dbReference type="PIRSF" id="PIRSF020687">
    <property type="entry name" value="UCP020687"/>
    <property type="match status" value="1"/>
</dbReference>
<feature type="chain" id="PRO_1000136649" description="UPF0266 membrane protein YobD">
    <location>
        <begin position="1"/>
        <end position="152"/>
    </location>
</feature>
<feature type="transmembrane region" description="Helical" evidence="1">
    <location>
        <begin position="6"/>
        <end position="26"/>
    </location>
</feature>
<feature type="transmembrane region" description="Helical" evidence="1">
    <location>
        <begin position="45"/>
        <end position="65"/>
    </location>
</feature>
<feature type="transmembrane region" description="Helical" evidence="1">
    <location>
        <begin position="67"/>
        <end position="87"/>
    </location>
</feature>
<organism>
    <name type="scientific">Salmonella newport (strain SL254)</name>
    <dbReference type="NCBI Taxonomy" id="423368"/>
    <lineage>
        <taxon>Bacteria</taxon>
        <taxon>Pseudomonadati</taxon>
        <taxon>Pseudomonadota</taxon>
        <taxon>Gammaproteobacteria</taxon>
        <taxon>Enterobacterales</taxon>
        <taxon>Enterobacteriaceae</taxon>
        <taxon>Salmonella</taxon>
    </lineage>
</organism>
<evidence type="ECO:0000255" key="1">
    <source>
        <dbReference type="HAMAP-Rule" id="MF_01071"/>
    </source>
</evidence>
<comment type="subcellular location">
    <subcellularLocation>
        <location evidence="1">Cell inner membrane</location>
        <topology evidence="1">Multi-pass membrane protein</topology>
    </subcellularLocation>
</comment>
<comment type="similarity">
    <text evidence="1">Belongs to the UPF0266 family.</text>
</comment>
<reference key="1">
    <citation type="journal article" date="2011" name="J. Bacteriol.">
        <title>Comparative genomics of 28 Salmonella enterica isolates: evidence for CRISPR-mediated adaptive sublineage evolution.</title>
        <authorList>
            <person name="Fricke W.F."/>
            <person name="Mammel M.K."/>
            <person name="McDermott P.F."/>
            <person name="Tartera C."/>
            <person name="White D.G."/>
            <person name="Leclerc J.E."/>
            <person name="Ravel J."/>
            <person name="Cebula T.A."/>
        </authorList>
    </citation>
    <scope>NUCLEOTIDE SEQUENCE [LARGE SCALE GENOMIC DNA]</scope>
    <source>
        <strain>SL254</strain>
    </source>
</reference>
<gene>
    <name evidence="1" type="primary">yobD</name>
    <name type="ordered locus">SNSL254_A1972</name>
</gene>
<proteinExistence type="inferred from homology"/>